<gene>
    <name evidence="1" type="primary">rpsM</name>
    <name type="ordered locus">LJ_0359</name>
</gene>
<reference key="1">
    <citation type="journal article" date="2004" name="Proc. Natl. Acad. Sci. U.S.A.">
        <title>The genome sequence of the probiotic intestinal bacterium Lactobacillus johnsonii NCC 533.</title>
        <authorList>
            <person name="Pridmore R.D."/>
            <person name="Berger B."/>
            <person name="Desiere F."/>
            <person name="Vilanova D."/>
            <person name="Barretto C."/>
            <person name="Pittet A.-C."/>
            <person name="Zwahlen M.-C."/>
            <person name="Rouvet M."/>
            <person name="Altermann E."/>
            <person name="Barrangou R."/>
            <person name="Mollet B."/>
            <person name="Mercenier A."/>
            <person name="Klaenhammer T."/>
            <person name="Arigoni F."/>
            <person name="Schell M.A."/>
        </authorList>
    </citation>
    <scope>NUCLEOTIDE SEQUENCE [LARGE SCALE GENOMIC DNA]</scope>
    <source>
        <strain>CNCM I-1225 / La1 / NCC 533</strain>
    </source>
</reference>
<organism>
    <name type="scientific">Lactobacillus johnsonii (strain CNCM I-12250 / La1 / NCC 533)</name>
    <dbReference type="NCBI Taxonomy" id="257314"/>
    <lineage>
        <taxon>Bacteria</taxon>
        <taxon>Bacillati</taxon>
        <taxon>Bacillota</taxon>
        <taxon>Bacilli</taxon>
        <taxon>Lactobacillales</taxon>
        <taxon>Lactobacillaceae</taxon>
        <taxon>Lactobacillus</taxon>
    </lineage>
</organism>
<sequence>MARIAGVDLPRNKRVVVALTYIYGIGEPTAKKICKDAGISEDIRTNDLTPEDQEKLRSEVDKYRVEGDLRREVSLNIKRLVEIGSYRGIRHRRGLPVRGQNTKNNARTRKGSKRK</sequence>
<evidence type="ECO:0000255" key="1">
    <source>
        <dbReference type="HAMAP-Rule" id="MF_01315"/>
    </source>
</evidence>
<evidence type="ECO:0000256" key="2">
    <source>
        <dbReference type="SAM" id="MobiDB-lite"/>
    </source>
</evidence>
<evidence type="ECO:0000305" key="3"/>
<accession>Q74L66</accession>
<comment type="function">
    <text evidence="1">Located at the top of the head of the 30S subunit, it contacts several helices of the 16S rRNA. In the 70S ribosome it contacts the 23S rRNA (bridge B1a) and protein L5 of the 50S subunit (bridge B1b), connecting the 2 subunits; these bridges are implicated in subunit movement. Contacts the tRNAs in the A and P-sites.</text>
</comment>
<comment type="subunit">
    <text evidence="1">Part of the 30S ribosomal subunit. Forms a loose heterodimer with protein S19. Forms two bridges to the 50S subunit in the 70S ribosome.</text>
</comment>
<comment type="similarity">
    <text evidence="1">Belongs to the universal ribosomal protein uS13 family.</text>
</comment>
<keyword id="KW-0687">Ribonucleoprotein</keyword>
<keyword id="KW-0689">Ribosomal protein</keyword>
<keyword id="KW-0694">RNA-binding</keyword>
<keyword id="KW-0699">rRNA-binding</keyword>
<keyword id="KW-0820">tRNA-binding</keyword>
<proteinExistence type="inferred from homology"/>
<feature type="chain" id="PRO_0000230517" description="Small ribosomal subunit protein uS13">
    <location>
        <begin position="1"/>
        <end position="115"/>
    </location>
</feature>
<feature type="region of interest" description="Disordered" evidence="2">
    <location>
        <begin position="92"/>
        <end position="115"/>
    </location>
</feature>
<feature type="compositionally biased region" description="Basic residues" evidence="2">
    <location>
        <begin position="106"/>
        <end position="115"/>
    </location>
</feature>
<protein>
    <recommendedName>
        <fullName evidence="1">Small ribosomal subunit protein uS13</fullName>
    </recommendedName>
    <alternativeName>
        <fullName evidence="3">30S ribosomal protein S13</fullName>
    </alternativeName>
</protein>
<dbReference type="EMBL" id="AE017198">
    <property type="protein sequence ID" value="AAS08349.1"/>
    <property type="molecule type" value="Genomic_DNA"/>
</dbReference>
<dbReference type="RefSeq" id="WP_003647814.1">
    <property type="nucleotide sequence ID" value="NC_005362.1"/>
</dbReference>
<dbReference type="SMR" id="Q74L66"/>
<dbReference type="GeneID" id="83569778"/>
<dbReference type="KEGG" id="ljo:LJ_0359"/>
<dbReference type="eggNOG" id="COG0099">
    <property type="taxonomic scope" value="Bacteria"/>
</dbReference>
<dbReference type="HOGENOM" id="CLU_103849_1_1_9"/>
<dbReference type="Proteomes" id="UP000000581">
    <property type="component" value="Chromosome"/>
</dbReference>
<dbReference type="GO" id="GO:0005829">
    <property type="term" value="C:cytosol"/>
    <property type="evidence" value="ECO:0007669"/>
    <property type="project" value="TreeGrafter"/>
</dbReference>
<dbReference type="GO" id="GO:0015935">
    <property type="term" value="C:small ribosomal subunit"/>
    <property type="evidence" value="ECO:0007669"/>
    <property type="project" value="TreeGrafter"/>
</dbReference>
<dbReference type="GO" id="GO:0019843">
    <property type="term" value="F:rRNA binding"/>
    <property type="evidence" value="ECO:0007669"/>
    <property type="project" value="UniProtKB-UniRule"/>
</dbReference>
<dbReference type="GO" id="GO:0003735">
    <property type="term" value="F:structural constituent of ribosome"/>
    <property type="evidence" value="ECO:0007669"/>
    <property type="project" value="InterPro"/>
</dbReference>
<dbReference type="GO" id="GO:0000049">
    <property type="term" value="F:tRNA binding"/>
    <property type="evidence" value="ECO:0007669"/>
    <property type="project" value="UniProtKB-UniRule"/>
</dbReference>
<dbReference type="GO" id="GO:0006412">
    <property type="term" value="P:translation"/>
    <property type="evidence" value="ECO:0007669"/>
    <property type="project" value="UniProtKB-UniRule"/>
</dbReference>
<dbReference type="FunFam" id="1.10.8.50:FF:000001">
    <property type="entry name" value="30S ribosomal protein S13"/>
    <property type="match status" value="1"/>
</dbReference>
<dbReference type="FunFam" id="4.10.910.10:FF:000001">
    <property type="entry name" value="30S ribosomal protein S13"/>
    <property type="match status" value="1"/>
</dbReference>
<dbReference type="Gene3D" id="1.10.8.50">
    <property type="match status" value="1"/>
</dbReference>
<dbReference type="Gene3D" id="4.10.910.10">
    <property type="entry name" value="30s ribosomal protein s13, domain 2"/>
    <property type="match status" value="1"/>
</dbReference>
<dbReference type="HAMAP" id="MF_01315">
    <property type="entry name" value="Ribosomal_uS13"/>
    <property type="match status" value="1"/>
</dbReference>
<dbReference type="InterPro" id="IPR027437">
    <property type="entry name" value="Rbsml_uS13_C"/>
</dbReference>
<dbReference type="InterPro" id="IPR001892">
    <property type="entry name" value="Ribosomal_uS13"/>
</dbReference>
<dbReference type="InterPro" id="IPR010979">
    <property type="entry name" value="Ribosomal_uS13-like_H2TH"/>
</dbReference>
<dbReference type="InterPro" id="IPR019980">
    <property type="entry name" value="Ribosomal_uS13_bac-type"/>
</dbReference>
<dbReference type="InterPro" id="IPR018269">
    <property type="entry name" value="Ribosomal_uS13_CS"/>
</dbReference>
<dbReference type="NCBIfam" id="TIGR03631">
    <property type="entry name" value="uS13_bact"/>
    <property type="match status" value="1"/>
</dbReference>
<dbReference type="PANTHER" id="PTHR10871">
    <property type="entry name" value="30S RIBOSOMAL PROTEIN S13/40S RIBOSOMAL PROTEIN S18"/>
    <property type="match status" value="1"/>
</dbReference>
<dbReference type="PANTHER" id="PTHR10871:SF1">
    <property type="entry name" value="SMALL RIBOSOMAL SUBUNIT PROTEIN US13M"/>
    <property type="match status" value="1"/>
</dbReference>
<dbReference type="Pfam" id="PF00416">
    <property type="entry name" value="Ribosomal_S13"/>
    <property type="match status" value="1"/>
</dbReference>
<dbReference type="PIRSF" id="PIRSF002134">
    <property type="entry name" value="Ribosomal_S13"/>
    <property type="match status" value="1"/>
</dbReference>
<dbReference type="SUPFAM" id="SSF46946">
    <property type="entry name" value="S13-like H2TH domain"/>
    <property type="match status" value="1"/>
</dbReference>
<dbReference type="PROSITE" id="PS00646">
    <property type="entry name" value="RIBOSOMAL_S13_1"/>
    <property type="match status" value="1"/>
</dbReference>
<dbReference type="PROSITE" id="PS50159">
    <property type="entry name" value="RIBOSOMAL_S13_2"/>
    <property type="match status" value="1"/>
</dbReference>
<name>RS13_LACJO</name>